<accession>C3L9Q2</accession>
<evidence type="ECO:0000255" key="1">
    <source>
        <dbReference type="HAMAP-Rule" id="MF_01018"/>
    </source>
</evidence>
<protein>
    <recommendedName>
        <fullName evidence="1">ATP phosphoribosyltransferase</fullName>
        <shortName evidence="1">ATP-PRT</shortName>
        <shortName evidence="1">ATP-PRTase</shortName>
        <ecNumber evidence="1">2.4.2.17</ecNumber>
    </recommendedName>
</protein>
<comment type="function">
    <text evidence="1">Catalyzes the condensation of ATP and 5-phosphoribose 1-diphosphate to form N'-(5'-phosphoribosyl)-ATP (PR-ATP). Has a crucial role in the pathway because the rate of histidine biosynthesis seems to be controlled primarily by regulation of HisG enzymatic activity.</text>
</comment>
<comment type="catalytic activity">
    <reaction evidence="1">
        <text>1-(5-phospho-beta-D-ribosyl)-ATP + diphosphate = 5-phospho-alpha-D-ribose 1-diphosphate + ATP</text>
        <dbReference type="Rhea" id="RHEA:18473"/>
        <dbReference type="ChEBI" id="CHEBI:30616"/>
        <dbReference type="ChEBI" id="CHEBI:33019"/>
        <dbReference type="ChEBI" id="CHEBI:58017"/>
        <dbReference type="ChEBI" id="CHEBI:73183"/>
        <dbReference type="EC" id="2.4.2.17"/>
    </reaction>
</comment>
<comment type="pathway">
    <text evidence="1">Amino-acid biosynthesis; L-histidine biosynthesis; L-histidine from 5-phospho-alpha-D-ribose 1-diphosphate: step 1/9.</text>
</comment>
<comment type="subunit">
    <text evidence="1">Heteromultimer composed of HisG and HisZ subunits.</text>
</comment>
<comment type="subcellular location">
    <subcellularLocation>
        <location evidence="1">Cytoplasm</location>
    </subcellularLocation>
</comment>
<comment type="domain">
    <text>Lacks the C-terminal regulatory region which is replaced by HisZ.</text>
</comment>
<comment type="similarity">
    <text evidence="1">Belongs to the ATP phosphoribosyltransferase family. Short subfamily.</text>
</comment>
<feature type="chain" id="PRO_1000213253" description="ATP phosphoribosyltransferase">
    <location>
        <begin position="1"/>
        <end position="211"/>
    </location>
</feature>
<organism>
    <name type="scientific">Bacillus anthracis (strain CDC 684 / NRRL 3495)</name>
    <dbReference type="NCBI Taxonomy" id="568206"/>
    <lineage>
        <taxon>Bacteria</taxon>
        <taxon>Bacillati</taxon>
        <taxon>Bacillota</taxon>
        <taxon>Bacilli</taxon>
        <taxon>Bacillales</taxon>
        <taxon>Bacillaceae</taxon>
        <taxon>Bacillus</taxon>
        <taxon>Bacillus cereus group</taxon>
    </lineage>
</organism>
<reference key="1">
    <citation type="submission" date="2008-10" db="EMBL/GenBank/DDBJ databases">
        <title>Genome sequence of Bacillus anthracis str. CDC 684.</title>
        <authorList>
            <person name="Dodson R.J."/>
            <person name="Munk A.C."/>
            <person name="Brettin T."/>
            <person name="Bruce D."/>
            <person name="Detter C."/>
            <person name="Tapia R."/>
            <person name="Han C."/>
            <person name="Sutton G."/>
            <person name="Sims D."/>
        </authorList>
    </citation>
    <scope>NUCLEOTIDE SEQUENCE [LARGE SCALE GENOMIC DNA]</scope>
    <source>
        <strain>CDC 684 / NRRL 3495</strain>
    </source>
</reference>
<proteinExistence type="inferred from homology"/>
<dbReference type="EC" id="2.4.2.17" evidence="1"/>
<dbReference type="EMBL" id="CP001215">
    <property type="protein sequence ID" value="ACP16883.1"/>
    <property type="molecule type" value="Genomic_DNA"/>
</dbReference>
<dbReference type="RefSeq" id="WP_001244471.1">
    <property type="nucleotide sequence ID" value="NC_012581.1"/>
</dbReference>
<dbReference type="SMR" id="C3L9Q2"/>
<dbReference type="GeneID" id="45021404"/>
<dbReference type="KEGG" id="bah:BAMEG_3170"/>
<dbReference type="HOGENOM" id="CLU_038115_2_0_9"/>
<dbReference type="UniPathway" id="UPA00031">
    <property type="reaction ID" value="UER00006"/>
</dbReference>
<dbReference type="GO" id="GO:0005737">
    <property type="term" value="C:cytoplasm"/>
    <property type="evidence" value="ECO:0007669"/>
    <property type="project" value="UniProtKB-SubCell"/>
</dbReference>
<dbReference type="GO" id="GO:0005524">
    <property type="term" value="F:ATP binding"/>
    <property type="evidence" value="ECO:0007669"/>
    <property type="project" value="UniProtKB-KW"/>
</dbReference>
<dbReference type="GO" id="GO:0003879">
    <property type="term" value="F:ATP phosphoribosyltransferase activity"/>
    <property type="evidence" value="ECO:0007669"/>
    <property type="project" value="UniProtKB-UniRule"/>
</dbReference>
<dbReference type="GO" id="GO:0000105">
    <property type="term" value="P:L-histidine biosynthetic process"/>
    <property type="evidence" value="ECO:0007669"/>
    <property type="project" value="UniProtKB-UniRule"/>
</dbReference>
<dbReference type="CDD" id="cd13595">
    <property type="entry name" value="PBP2_HisGs"/>
    <property type="match status" value="1"/>
</dbReference>
<dbReference type="FunFam" id="3.40.190.10:FF:000011">
    <property type="entry name" value="ATP phosphoribosyltransferase"/>
    <property type="match status" value="1"/>
</dbReference>
<dbReference type="Gene3D" id="3.40.190.10">
    <property type="entry name" value="Periplasmic binding protein-like II"/>
    <property type="match status" value="2"/>
</dbReference>
<dbReference type="HAMAP" id="MF_01018">
    <property type="entry name" value="HisG_Short"/>
    <property type="match status" value="1"/>
</dbReference>
<dbReference type="InterPro" id="IPR013820">
    <property type="entry name" value="ATP_PRibTrfase_cat"/>
</dbReference>
<dbReference type="InterPro" id="IPR018198">
    <property type="entry name" value="ATP_PRibTrfase_CS"/>
</dbReference>
<dbReference type="InterPro" id="IPR001348">
    <property type="entry name" value="ATP_PRibTrfase_HisG"/>
</dbReference>
<dbReference type="InterPro" id="IPR024893">
    <property type="entry name" value="ATP_PRibTrfase_HisG_short"/>
</dbReference>
<dbReference type="NCBIfam" id="TIGR00070">
    <property type="entry name" value="hisG"/>
    <property type="match status" value="1"/>
</dbReference>
<dbReference type="PANTHER" id="PTHR21403:SF8">
    <property type="entry name" value="ATP PHOSPHORIBOSYLTRANSFERASE"/>
    <property type="match status" value="1"/>
</dbReference>
<dbReference type="PANTHER" id="PTHR21403">
    <property type="entry name" value="ATP PHOSPHORIBOSYLTRANSFERASE ATP-PRTASE"/>
    <property type="match status" value="1"/>
</dbReference>
<dbReference type="Pfam" id="PF01634">
    <property type="entry name" value="HisG"/>
    <property type="match status" value="1"/>
</dbReference>
<dbReference type="SUPFAM" id="SSF53850">
    <property type="entry name" value="Periplasmic binding protein-like II"/>
    <property type="match status" value="1"/>
</dbReference>
<dbReference type="PROSITE" id="PS01316">
    <property type="entry name" value="ATP_P_PHORIBOSYLTR"/>
    <property type="match status" value="1"/>
</dbReference>
<keyword id="KW-0028">Amino-acid biosynthesis</keyword>
<keyword id="KW-0067">ATP-binding</keyword>
<keyword id="KW-0963">Cytoplasm</keyword>
<keyword id="KW-0328">Glycosyltransferase</keyword>
<keyword id="KW-0368">Histidine biosynthesis</keyword>
<keyword id="KW-0547">Nucleotide-binding</keyword>
<keyword id="KW-0808">Transferase</keyword>
<name>HIS1_BACAC</name>
<gene>
    <name evidence="1" type="primary">hisG</name>
    <name type="ordered locus">BAMEG_3170</name>
</gene>
<sequence>MRNIQIALTKGRLEKHVIPLFEQIGIDCSELKNKGRKLVFQSKNTDISFILVKAVDVATYVEHGVADIGVVGKDILMENEKDIYEMLDLGVGVCKFCVASIPTYNPKSYRKKCIATKYPHITSNYFHNKGEDVEIIKIEGSVEIAPILGLADAIVDIVETGKTLQENGLIVFEEMYSISARMIVNKAALKTKKDEIFSIINMMEQEILSGK</sequence>